<sequence>MSALNLTVRVHPVVLFQVVDAFERRNADSHRVIGTLLGSVDKGVVEVTNCFCVPHKEHDDQVEAELSYALDMYDLNRKVNANESVVGWWATGNEVTNHSSVIHEYYARECNNPVHLTVDTSLQGGRMGLRAYVCIQLGVPGGKTGCMFTPIPVELTSYEPETFGLKLLQKTVGVSPAHRPKTVPPMLDLAQISEASTKLQSLLELILKYVDDVIAHKVTPDNAVGRQLLDLIHSVPHMTHEQFTQMFNANVRDLLMVITLSQLIKTQLQLNEKLTFLPTA</sequence>
<name>EI3F1_DROVI</name>
<evidence type="ECO:0000255" key="1">
    <source>
        <dbReference type="HAMAP-Rule" id="MF_03005"/>
    </source>
</evidence>
<evidence type="ECO:0000255" key="2">
    <source>
        <dbReference type="PROSITE-ProRule" id="PRU01182"/>
    </source>
</evidence>
<accession>B4LZ60</accession>
<keyword id="KW-0963">Cytoplasm</keyword>
<keyword id="KW-0396">Initiation factor</keyword>
<keyword id="KW-0648">Protein biosynthesis</keyword>
<keyword id="KW-1185">Reference proteome</keyword>
<proteinExistence type="inferred from homology"/>
<gene>
    <name evidence="1" type="primary">eIF3f1</name>
    <name evidence="1" type="synonym">eIF3-S5-1</name>
    <name type="ORF">GJ23292</name>
</gene>
<organism>
    <name type="scientific">Drosophila virilis</name>
    <name type="common">Fruit fly</name>
    <dbReference type="NCBI Taxonomy" id="7244"/>
    <lineage>
        <taxon>Eukaryota</taxon>
        <taxon>Metazoa</taxon>
        <taxon>Ecdysozoa</taxon>
        <taxon>Arthropoda</taxon>
        <taxon>Hexapoda</taxon>
        <taxon>Insecta</taxon>
        <taxon>Pterygota</taxon>
        <taxon>Neoptera</taxon>
        <taxon>Endopterygota</taxon>
        <taxon>Diptera</taxon>
        <taxon>Brachycera</taxon>
        <taxon>Muscomorpha</taxon>
        <taxon>Ephydroidea</taxon>
        <taxon>Drosophilidae</taxon>
        <taxon>Drosophila</taxon>
    </lineage>
</organism>
<protein>
    <recommendedName>
        <fullName evidence="1">Eukaryotic translation initiation factor 3 subunit F-1</fullName>
        <shortName evidence="1">eIF3f-1</shortName>
    </recommendedName>
    <alternativeName>
        <fullName evidence="1">Eukaryotic translation initiation factor 3 subunit 5-1</fullName>
    </alternativeName>
</protein>
<feature type="chain" id="PRO_0000364315" description="Eukaryotic translation initiation factor 3 subunit F-1">
    <location>
        <begin position="1"/>
        <end position="280"/>
    </location>
</feature>
<feature type="domain" description="MPN" evidence="2">
    <location>
        <begin position="8"/>
        <end position="138"/>
    </location>
</feature>
<reference key="1">
    <citation type="journal article" date="2007" name="Nature">
        <title>Evolution of genes and genomes on the Drosophila phylogeny.</title>
        <authorList>
            <consortium name="Drosophila 12 genomes consortium"/>
        </authorList>
    </citation>
    <scope>NUCLEOTIDE SEQUENCE [LARGE SCALE GENOMIC DNA]</scope>
    <source>
        <strain>Tucson 15010-1051.87</strain>
    </source>
</reference>
<dbReference type="EMBL" id="CH940650">
    <property type="protein sequence ID" value="EDW67067.1"/>
    <property type="molecule type" value="Genomic_DNA"/>
</dbReference>
<dbReference type="RefSeq" id="XP_002053547.1">
    <property type="nucleotide sequence ID" value="XM_002053511.4"/>
</dbReference>
<dbReference type="SMR" id="B4LZ60"/>
<dbReference type="FunCoup" id="B4LZ60">
    <property type="interactions" value="2214"/>
</dbReference>
<dbReference type="STRING" id="7244.B4LZ60"/>
<dbReference type="EnsemblMetazoa" id="FBtr0239217">
    <property type="protein sequence ID" value="FBpp0237709"/>
    <property type="gene ID" value="FBgn0210394"/>
</dbReference>
<dbReference type="EnsemblMetazoa" id="XM_002053511.3">
    <property type="protein sequence ID" value="XP_002053547.1"/>
    <property type="gene ID" value="LOC6629594"/>
</dbReference>
<dbReference type="GeneID" id="6629594"/>
<dbReference type="KEGG" id="dvi:6629594"/>
<dbReference type="CTD" id="40587"/>
<dbReference type="eggNOG" id="KOG2975">
    <property type="taxonomic scope" value="Eukaryota"/>
</dbReference>
<dbReference type="HOGENOM" id="CLU_027018_0_1_1"/>
<dbReference type="InParanoid" id="B4LZ60"/>
<dbReference type="OMA" id="EYFVHFH"/>
<dbReference type="OrthoDB" id="25498at2759"/>
<dbReference type="PhylomeDB" id="B4LZ60"/>
<dbReference type="Proteomes" id="UP000008792">
    <property type="component" value="Unassembled WGS sequence"/>
</dbReference>
<dbReference type="GO" id="GO:0016282">
    <property type="term" value="C:eukaryotic 43S preinitiation complex"/>
    <property type="evidence" value="ECO:0007669"/>
    <property type="project" value="UniProtKB-UniRule"/>
</dbReference>
<dbReference type="GO" id="GO:0033290">
    <property type="term" value="C:eukaryotic 48S preinitiation complex"/>
    <property type="evidence" value="ECO:0007669"/>
    <property type="project" value="UniProtKB-UniRule"/>
</dbReference>
<dbReference type="GO" id="GO:0071541">
    <property type="term" value="C:eukaryotic translation initiation factor 3 complex, eIF3m"/>
    <property type="evidence" value="ECO:0007669"/>
    <property type="project" value="TreeGrafter"/>
</dbReference>
<dbReference type="GO" id="GO:0140492">
    <property type="term" value="F:metal-dependent deubiquitinase activity"/>
    <property type="evidence" value="ECO:0007669"/>
    <property type="project" value="EnsemblMetazoa"/>
</dbReference>
<dbReference type="GO" id="GO:0003743">
    <property type="term" value="F:translation initiation factor activity"/>
    <property type="evidence" value="ECO:0007669"/>
    <property type="project" value="UniProtKB-UniRule"/>
</dbReference>
<dbReference type="GO" id="GO:0031369">
    <property type="term" value="F:translation initiation factor binding"/>
    <property type="evidence" value="ECO:0007669"/>
    <property type="project" value="InterPro"/>
</dbReference>
<dbReference type="GO" id="GO:0140367">
    <property type="term" value="P:antibacterial innate immune response"/>
    <property type="evidence" value="ECO:0007669"/>
    <property type="project" value="EnsemblMetazoa"/>
</dbReference>
<dbReference type="GO" id="GO:0050829">
    <property type="term" value="P:defense response to Gram-negative bacterium"/>
    <property type="evidence" value="ECO:0007669"/>
    <property type="project" value="EnsemblMetazoa"/>
</dbReference>
<dbReference type="GO" id="GO:0001732">
    <property type="term" value="P:formation of cytoplasmic translation initiation complex"/>
    <property type="evidence" value="ECO:0007669"/>
    <property type="project" value="UniProtKB-UniRule"/>
</dbReference>
<dbReference type="GO" id="GO:0045747">
    <property type="term" value="P:positive regulation of Notch signaling pathway"/>
    <property type="evidence" value="ECO:0007669"/>
    <property type="project" value="EnsemblMetazoa"/>
</dbReference>
<dbReference type="GO" id="GO:0061059">
    <property type="term" value="P:positive regulation of peptidoglycan recognition protein signaling pathway"/>
    <property type="evidence" value="ECO:0007669"/>
    <property type="project" value="EnsemblMetazoa"/>
</dbReference>
<dbReference type="CDD" id="cd08064">
    <property type="entry name" value="MPN_eIF3f"/>
    <property type="match status" value="1"/>
</dbReference>
<dbReference type="FunFam" id="3.40.140.10:FF:000014">
    <property type="entry name" value="Eukaryotic translation initiation factor 3 subunit F"/>
    <property type="match status" value="1"/>
</dbReference>
<dbReference type="Gene3D" id="3.40.140.10">
    <property type="entry name" value="Cytidine Deaminase, domain 2"/>
    <property type="match status" value="1"/>
</dbReference>
<dbReference type="HAMAP" id="MF_03005">
    <property type="entry name" value="eIF3f"/>
    <property type="match status" value="1"/>
</dbReference>
<dbReference type="InterPro" id="IPR027531">
    <property type="entry name" value="eIF3f"/>
</dbReference>
<dbReference type="InterPro" id="IPR024969">
    <property type="entry name" value="EIF3F/CSN6-like_C"/>
</dbReference>
<dbReference type="InterPro" id="IPR000555">
    <property type="entry name" value="JAMM/MPN+_dom"/>
</dbReference>
<dbReference type="InterPro" id="IPR037518">
    <property type="entry name" value="MPN"/>
</dbReference>
<dbReference type="PANTHER" id="PTHR10540:SF6">
    <property type="entry name" value="EUKARYOTIC TRANSLATION INITIATION FACTOR 3 SUBUNIT F"/>
    <property type="match status" value="1"/>
</dbReference>
<dbReference type="PANTHER" id="PTHR10540">
    <property type="entry name" value="EUKARYOTIC TRANSLATION INITIATION FACTOR 3 SUBUNIT F-RELATED"/>
    <property type="match status" value="1"/>
</dbReference>
<dbReference type="Pfam" id="PF01398">
    <property type="entry name" value="JAB"/>
    <property type="match status" value="1"/>
</dbReference>
<dbReference type="Pfam" id="PF13012">
    <property type="entry name" value="MitMem_reg"/>
    <property type="match status" value="1"/>
</dbReference>
<dbReference type="SMART" id="SM00232">
    <property type="entry name" value="JAB_MPN"/>
    <property type="match status" value="1"/>
</dbReference>
<dbReference type="PROSITE" id="PS50249">
    <property type="entry name" value="MPN"/>
    <property type="match status" value="1"/>
</dbReference>
<comment type="function">
    <text evidence="1">Component of the eukaryotic translation initiation factor 3 (eIF-3) complex, which is involved in protein synthesis of a specialized repertoire of mRNAs and, together with other initiation factors, stimulates binding of mRNA and methionyl-tRNAi to the 40S ribosome. The eIF-3 complex specifically targets and initiates translation of a subset of mRNAs involved in cell proliferation.</text>
</comment>
<comment type="subunit">
    <text evidence="1">Component of the eukaryotic translation initiation factor 3 (eIF-3) complex. The eIF-3 complex interacts with pix.</text>
</comment>
<comment type="subcellular location">
    <subcellularLocation>
        <location evidence="1">Cytoplasm</location>
    </subcellularLocation>
</comment>
<comment type="similarity">
    <text evidence="1">Belongs to the eIF-3 subunit F family.</text>
</comment>